<protein>
    <recommendedName>
        <fullName evidence="1">Large ribosomal subunit protein bL34</fullName>
    </recommendedName>
    <alternativeName>
        <fullName evidence="2">50S ribosomal protein L34</fullName>
    </alternativeName>
</protein>
<gene>
    <name evidence="1" type="primary">rpmH</name>
    <name type="ordered locus">BB4990</name>
</gene>
<keyword id="KW-0687">Ribonucleoprotein</keyword>
<keyword id="KW-0689">Ribosomal protein</keyword>
<accession>Q7WDJ8</accession>
<name>RL34_BORBR</name>
<reference key="1">
    <citation type="journal article" date="2003" name="Nat. Genet.">
        <title>Comparative analysis of the genome sequences of Bordetella pertussis, Bordetella parapertussis and Bordetella bronchiseptica.</title>
        <authorList>
            <person name="Parkhill J."/>
            <person name="Sebaihia M."/>
            <person name="Preston A."/>
            <person name="Murphy L.D."/>
            <person name="Thomson N.R."/>
            <person name="Harris D.E."/>
            <person name="Holden M.T.G."/>
            <person name="Churcher C.M."/>
            <person name="Bentley S.D."/>
            <person name="Mungall K.L."/>
            <person name="Cerdeno-Tarraga A.-M."/>
            <person name="Temple L."/>
            <person name="James K.D."/>
            <person name="Harris B."/>
            <person name="Quail M.A."/>
            <person name="Achtman M."/>
            <person name="Atkin R."/>
            <person name="Baker S."/>
            <person name="Basham D."/>
            <person name="Bason N."/>
            <person name="Cherevach I."/>
            <person name="Chillingworth T."/>
            <person name="Collins M."/>
            <person name="Cronin A."/>
            <person name="Davis P."/>
            <person name="Doggett J."/>
            <person name="Feltwell T."/>
            <person name="Goble A."/>
            <person name="Hamlin N."/>
            <person name="Hauser H."/>
            <person name="Holroyd S."/>
            <person name="Jagels K."/>
            <person name="Leather S."/>
            <person name="Moule S."/>
            <person name="Norberczak H."/>
            <person name="O'Neil S."/>
            <person name="Ormond D."/>
            <person name="Price C."/>
            <person name="Rabbinowitsch E."/>
            <person name="Rutter S."/>
            <person name="Sanders M."/>
            <person name="Saunders D."/>
            <person name="Seeger K."/>
            <person name="Sharp S."/>
            <person name="Simmonds M."/>
            <person name="Skelton J."/>
            <person name="Squares R."/>
            <person name="Squares S."/>
            <person name="Stevens K."/>
            <person name="Unwin L."/>
            <person name="Whitehead S."/>
            <person name="Barrell B.G."/>
            <person name="Maskell D.J."/>
        </authorList>
    </citation>
    <scope>NUCLEOTIDE SEQUENCE [LARGE SCALE GENOMIC DNA]</scope>
    <source>
        <strain>ATCC BAA-588 / NCTC 13252 / RB50</strain>
    </source>
</reference>
<dbReference type="EMBL" id="BX640452">
    <property type="protein sequence ID" value="CAE35354.1"/>
    <property type="molecule type" value="Genomic_DNA"/>
</dbReference>
<dbReference type="RefSeq" id="WP_003816025.1">
    <property type="nucleotide sequence ID" value="NC_002927.3"/>
</dbReference>
<dbReference type="SMR" id="Q7WDJ8"/>
<dbReference type="GeneID" id="94355904"/>
<dbReference type="KEGG" id="bbr:BB4990"/>
<dbReference type="eggNOG" id="COG0230">
    <property type="taxonomic scope" value="Bacteria"/>
</dbReference>
<dbReference type="HOGENOM" id="CLU_129938_2_0_4"/>
<dbReference type="Proteomes" id="UP000001027">
    <property type="component" value="Chromosome"/>
</dbReference>
<dbReference type="GO" id="GO:1990904">
    <property type="term" value="C:ribonucleoprotein complex"/>
    <property type="evidence" value="ECO:0007669"/>
    <property type="project" value="UniProtKB-KW"/>
</dbReference>
<dbReference type="GO" id="GO:0005840">
    <property type="term" value="C:ribosome"/>
    <property type="evidence" value="ECO:0007669"/>
    <property type="project" value="UniProtKB-KW"/>
</dbReference>
<dbReference type="GO" id="GO:0003735">
    <property type="term" value="F:structural constituent of ribosome"/>
    <property type="evidence" value="ECO:0007669"/>
    <property type="project" value="InterPro"/>
</dbReference>
<dbReference type="GO" id="GO:0006412">
    <property type="term" value="P:translation"/>
    <property type="evidence" value="ECO:0007669"/>
    <property type="project" value="UniProtKB-UniRule"/>
</dbReference>
<dbReference type="FunFam" id="1.10.287.3980:FF:000001">
    <property type="entry name" value="Mitochondrial ribosomal protein L34"/>
    <property type="match status" value="1"/>
</dbReference>
<dbReference type="Gene3D" id="1.10.287.3980">
    <property type="match status" value="1"/>
</dbReference>
<dbReference type="HAMAP" id="MF_00391">
    <property type="entry name" value="Ribosomal_bL34"/>
    <property type="match status" value="1"/>
</dbReference>
<dbReference type="InterPro" id="IPR000271">
    <property type="entry name" value="Ribosomal_bL34"/>
</dbReference>
<dbReference type="InterPro" id="IPR020939">
    <property type="entry name" value="Ribosomal_bL34_CS"/>
</dbReference>
<dbReference type="NCBIfam" id="TIGR01030">
    <property type="entry name" value="rpmH_bact"/>
    <property type="match status" value="1"/>
</dbReference>
<dbReference type="PANTHER" id="PTHR14503:SF4">
    <property type="entry name" value="LARGE RIBOSOMAL SUBUNIT PROTEIN BL34M"/>
    <property type="match status" value="1"/>
</dbReference>
<dbReference type="PANTHER" id="PTHR14503">
    <property type="entry name" value="MITOCHONDRIAL RIBOSOMAL PROTEIN 34 FAMILY MEMBER"/>
    <property type="match status" value="1"/>
</dbReference>
<dbReference type="Pfam" id="PF00468">
    <property type="entry name" value="Ribosomal_L34"/>
    <property type="match status" value="1"/>
</dbReference>
<dbReference type="PROSITE" id="PS00784">
    <property type="entry name" value="RIBOSOMAL_L34"/>
    <property type="match status" value="1"/>
</dbReference>
<feature type="chain" id="PRO_0000187346" description="Large ribosomal subunit protein bL34">
    <location>
        <begin position="1"/>
        <end position="44"/>
    </location>
</feature>
<comment type="similarity">
    <text evidence="1">Belongs to the bacterial ribosomal protein bL34 family.</text>
</comment>
<evidence type="ECO:0000255" key="1">
    <source>
        <dbReference type="HAMAP-Rule" id="MF_00391"/>
    </source>
</evidence>
<evidence type="ECO:0000305" key="2"/>
<organism>
    <name type="scientific">Bordetella bronchiseptica (strain ATCC BAA-588 / NCTC 13252 / RB50)</name>
    <name type="common">Alcaligenes bronchisepticus</name>
    <dbReference type="NCBI Taxonomy" id="257310"/>
    <lineage>
        <taxon>Bacteria</taxon>
        <taxon>Pseudomonadati</taxon>
        <taxon>Pseudomonadota</taxon>
        <taxon>Betaproteobacteria</taxon>
        <taxon>Burkholderiales</taxon>
        <taxon>Alcaligenaceae</taxon>
        <taxon>Bordetella</taxon>
    </lineage>
</organism>
<proteinExistence type="inferred from homology"/>
<sequence>MKRTYQPSVTRRKRTHGFRVRMKTRAGRAILNARRAKGRKRLAV</sequence>